<keyword id="KW-1003">Cell membrane</keyword>
<keyword id="KW-0342">GTP-binding</keyword>
<keyword id="KW-0378">Hydrolase</keyword>
<keyword id="KW-0472">Membrane</keyword>
<keyword id="KW-0547">Nucleotide-binding</keyword>
<keyword id="KW-0648">Protein biosynthesis</keyword>
<gene>
    <name evidence="1" type="primary">lepA</name>
    <name type="ordered locus">SPG_1094</name>
</gene>
<feature type="chain" id="PRO_1000092452" description="Elongation factor 4">
    <location>
        <begin position="1"/>
        <end position="607"/>
    </location>
</feature>
<feature type="domain" description="tr-type G">
    <location>
        <begin position="11"/>
        <end position="193"/>
    </location>
</feature>
<feature type="binding site" evidence="1">
    <location>
        <begin position="23"/>
        <end position="28"/>
    </location>
    <ligand>
        <name>GTP</name>
        <dbReference type="ChEBI" id="CHEBI:37565"/>
    </ligand>
</feature>
<feature type="binding site" evidence="1">
    <location>
        <begin position="140"/>
        <end position="143"/>
    </location>
    <ligand>
        <name>GTP</name>
        <dbReference type="ChEBI" id="CHEBI:37565"/>
    </ligand>
</feature>
<dbReference type="EC" id="3.6.5.n1" evidence="1"/>
<dbReference type="EMBL" id="CP001015">
    <property type="protein sequence ID" value="ACF56658.1"/>
    <property type="molecule type" value="Genomic_DNA"/>
</dbReference>
<dbReference type="SMR" id="B5E4T8"/>
<dbReference type="KEGG" id="spx:SPG_1094"/>
<dbReference type="HOGENOM" id="CLU_009995_3_3_9"/>
<dbReference type="GO" id="GO:0005886">
    <property type="term" value="C:plasma membrane"/>
    <property type="evidence" value="ECO:0007669"/>
    <property type="project" value="UniProtKB-SubCell"/>
</dbReference>
<dbReference type="GO" id="GO:0005525">
    <property type="term" value="F:GTP binding"/>
    <property type="evidence" value="ECO:0007669"/>
    <property type="project" value="UniProtKB-UniRule"/>
</dbReference>
<dbReference type="GO" id="GO:0003924">
    <property type="term" value="F:GTPase activity"/>
    <property type="evidence" value="ECO:0007669"/>
    <property type="project" value="UniProtKB-UniRule"/>
</dbReference>
<dbReference type="GO" id="GO:0043022">
    <property type="term" value="F:ribosome binding"/>
    <property type="evidence" value="ECO:0007669"/>
    <property type="project" value="UniProtKB-UniRule"/>
</dbReference>
<dbReference type="GO" id="GO:0003746">
    <property type="term" value="F:translation elongation factor activity"/>
    <property type="evidence" value="ECO:0007669"/>
    <property type="project" value="UniProtKB-UniRule"/>
</dbReference>
<dbReference type="GO" id="GO:0045727">
    <property type="term" value="P:positive regulation of translation"/>
    <property type="evidence" value="ECO:0007669"/>
    <property type="project" value="UniProtKB-UniRule"/>
</dbReference>
<dbReference type="CDD" id="cd03699">
    <property type="entry name" value="EF4_II"/>
    <property type="match status" value="1"/>
</dbReference>
<dbReference type="CDD" id="cd16260">
    <property type="entry name" value="EF4_III"/>
    <property type="match status" value="1"/>
</dbReference>
<dbReference type="CDD" id="cd01890">
    <property type="entry name" value="LepA"/>
    <property type="match status" value="1"/>
</dbReference>
<dbReference type="CDD" id="cd03709">
    <property type="entry name" value="lepA_C"/>
    <property type="match status" value="1"/>
</dbReference>
<dbReference type="FunFam" id="3.40.50.300:FF:000078">
    <property type="entry name" value="Elongation factor 4"/>
    <property type="match status" value="1"/>
</dbReference>
<dbReference type="FunFam" id="2.40.30.10:FF:000015">
    <property type="entry name" value="Translation factor GUF1, mitochondrial"/>
    <property type="match status" value="1"/>
</dbReference>
<dbReference type="FunFam" id="3.30.70.240:FF:000007">
    <property type="entry name" value="Translation factor GUF1, mitochondrial"/>
    <property type="match status" value="1"/>
</dbReference>
<dbReference type="FunFam" id="3.30.70.2570:FF:000001">
    <property type="entry name" value="Translation factor GUF1, mitochondrial"/>
    <property type="match status" value="1"/>
</dbReference>
<dbReference type="FunFam" id="3.30.70.870:FF:000004">
    <property type="entry name" value="Translation factor GUF1, mitochondrial"/>
    <property type="match status" value="1"/>
</dbReference>
<dbReference type="Gene3D" id="3.30.70.240">
    <property type="match status" value="1"/>
</dbReference>
<dbReference type="Gene3D" id="3.30.70.2570">
    <property type="entry name" value="Elongation factor 4, C-terminal domain"/>
    <property type="match status" value="1"/>
</dbReference>
<dbReference type="Gene3D" id="3.30.70.870">
    <property type="entry name" value="Elongation Factor G (Translational Gtpase), domain 3"/>
    <property type="match status" value="1"/>
</dbReference>
<dbReference type="Gene3D" id="3.40.50.300">
    <property type="entry name" value="P-loop containing nucleotide triphosphate hydrolases"/>
    <property type="match status" value="1"/>
</dbReference>
<dbReference type="Gene3D" id="2.40.30.10">
    <property type="entry name" value="Translation factors"/>
    <property type="match status" value="1"/>
</dbReference>
<dbReference type="HAMAP" id="MF_00071">
    <property type="entry name" value="LepA"/>
    <property type="match status" value="1"/>
</dbReference>
<dbReference type="InterPro" id="IPR006297">
    <property type="entry name" value="EF-4"/>
</dbReference>
<dbReference type="InterPro" id="IPR035647">
    <property type="entry name" value="EFG_III/V"/>
</dbReference>
<dbReference type="InterPro" id="IPR000640">
    <property type="entry name" value="EFG_V-like"/>
</dbReference>
<dbReference type="InterPro" id="IPR004161">
    <property type="entry name" value="EFTu-like_2"/>
</dbReference>
<dbReference type="InterPro" id="IPR031157">
    <property type="entry name" value="G_TR_CS"/>
</dbReference>
<dbReference type="InterPro" id="IPR038363">
    <property type="entry name" value="LepA_C_sf"/>
</dbReference>
<dbReference type="InterPro" id="IPR013842">
    <property type="entry name" value="LepA_CTD"/>
</dbReference>
<dbReference type="InterPro" id="IPR035654">
    <property type="entry name" value="LepA_IV"/>
</dbReference>
<dbReference type="InterPro" id="IPR027417">
    <property type="entry name" value="P-loop_NTPase"/>
</dbReference>
<dbReference type="InterPro" id="IPR005225">
    <property type="entry name" value="Small_GTP-bd"/>
</dbReference>
<dbReference type="InterPro" id="IPR000795">
    <property type="entry name" value="T_Tr_GTP-bd_dom"/>
</dbReference>
<dbReference type="NCBIfam" id="TIGR01393">
    <property type="entry name" value="lepA"/>
    <property type="match status" value="1"/>
</dbReference>
<dbReference type="NCBIfam" id="TIGR00231">
    <property type="entry name" value="small_GTP"/>
    <property type="match status" value="1"/>
</dbReference>
<dbReference type="PANTHER" id="PTHR43512:SF4">
    <property type="entry name" value="TRANSLATION FACTOR GUF1 HOMOLOG, CHLOROPLASTIC"/>
    <property type="match status" value="1"/>
</dbReference>
<dbReference type="PANTHER" id="PTHR43512">
    <property type="entry name" value="TRANSLATION FACTOR GUF1-RELATED"/>
    <property type="match status" value="1"/>
</dbReference>
<dbReference type="Pfam" id="PF00679">
    <property type="entry name" value="EFG_C"/>
    <property type="match status" value="1"/>
</dbReference>
<dbReference type="Pfam" id="PF00009">
    <property type="entry name" value="GTP_EFTU"/>
    <property type="match status" value="1"/>
</dbReference>
<dbReference type="Pfam" id="PF03144">
    <property type="entry name" value="GTP_EFTU_D2"/>
    <property type="match status" value="1"/>
</dbReference>
<dbReference type="Pfam" id="PF06421">
    <property type="entry name" value="LepA_C"/>
    <property type="match status" value="1"/>
</dbReference>
<dbReference type="PRINTS" id="PR00315">
    <property type="entry name" value="ELONGATNFCT"/>
</dbReference>
<dbReference type="SMART" id="SM00838">
    <property type="entry name" value="EFG_C"/>
    <property type="match status" value="1"/>
</dbReference>
<dbReference type="SUPFAM" id="SSF54980">
    <property type="entry name" value="EF-G C-terminal domain-like"/>
    <property type="match status" value="2"/>
</dbReference>
<dbReference type="SUPFAM" id="SSF52540">
    <property type="entry name" value="P-loop containing nucleoside triphosphate hydrolases"/>
    <property type="match status" value="1"/>
</dbReference>
<dbReference type="PROSITE" id="PS00301">
    <property type="entry name" value="G_TR_1"/>
    <property type="match status" value="1"/>
</dbReference>
<dbReference type="PROSITE" id="PS51722">
    <property type="entry name" value="G_TR_2"/>
    <property type="match status" value="1"/>
</dbReference>
<comment type="function">
    <text evidence="1">Required for accurate and efficient protein synthesis under certain stress conditions. May act as a fidelity factor of the translation reaction, by catalyzing a one-codon backward translocation of tRNAs on improperly translocated ribosomes. Back-translocation proceeds from a post-translocation (POST) complex to a pre-translocation (PRE) complex, thus giving elongation factor G a second chance to translocate the tRNAs correctly. Binds to ribosomes in a GTP-dependent manner.</text>
</comment>
<comment type="catalytic activity">
    <reaction evidence="1">
        <text>GTP + H2O = GDP + phosphate + H(+)</text>
        <dbReference type="Rhea" id="RHEA:19669"/>
        <dbReference type="ChEBI" id="CHEBI:15377"/>
        <dbReference type="ChEBI" id="CHEBI:15378"/>
        <dbReference type="ChEBI" id="CHEBI:37565"/>
        <dbReference type="ChEBI" id="CHEBI:43474"/>
        <dbReference type="ChEBI" id="CHEBI:58189"/>
        <dbReference type="EC" id="3.6.5.n1"/>
    </reaction>
</comment>
<comment type="subcellular location">
    <subcellularLocation>
        <location evidence="1">Cell membrane</location>
        <topology evidence="1">Peripheral membrane protein</topology>
        <orientation evidence="1">Cytoplasmic side</orientation>
    </subcellularLocation>
</comment>
<comment type="similarity">
    <text evidence="1">Belongs to the TRAFAC class translation factor GTPase superfamily. Classic translation factor GTPase family. LepA subfamily.</text>
</comment>
<reference key="1">
    <citation type="journal article" date="2001" name="Microb. Drug Resist.">
        <title>Annotated draft genomic sequence from a Streptococcus pneumoniae type 19F clinical isolate.</title>
        <authorList>
            <person name="Dopazo J."/>
            <person name="Mendoza A."/>
            <person name="Herrero J."/>
            <person name="Caldara F."/>
            <person name="Humbert Y."/>
            <person name="Friedli L."/>
            <person name="Guerrier M."/>
            <person name="Grand-Schenk E."/>
            <person name="Gandin C."/>
            <person name="de Francesco M."/>
            <person name="Polissi A."/>
            <person name="Buell G."/>
            <person name="Feger G."/>
            <person name="Garcia E."/>
            <person name="Peitsch M."/>
            <person name="Garcia-Bustos J.F."/>
        </authorList>
    </citation>
    <scope>NUCLEOTIDE SEQUENCE [LARGE SCALE GENOMIC DNA]</scope>
    <source>
        <strain>G54</strain>
    </source>
</reference>
<reference key="2">
    <citation type="submission" date="2008-03" db="EMBL/GenBank/DDBJ databases">
        <title>Pneumococcal beta glucoside metabolism investigated by whole genome comparison.</title>
        <authorList>
            <person name="Mulas L."/>
            <person name="Trappetti C."/>
            <person name="Hakenbeck R."/>
            <person name="Iannelli F."/>
            <person name="Pozzi G."/>
            <person name="Davidsen T.M."/>
            <person name="Tettelin H."/>
            <person name="Oggioni M."/>
        </authorList>
    </citation>
    <scope>NUCLEOTIDE SEQUENCE [LARGE SCALE GENOMIC DNA]</scope>
    <source>
        <strain>G54</strain>
    </source>
</reference>
<sequence>MNLEELKKRQEKIRNFSIIAHIDHGKSTLADRILEKTETVSSREMQAQLLDSMDLERERGITIKLNAIELNYTAKDGETYIFHLIDTPGHVDFTYEVSRSLAACEGAILVVDAAQGIEAQTLANVYLALDNDLEIMPIINKIDLPAADPERVRTEIEDVIGLDASEAVLASAKAGIGIEEILEQIVEKVPAPTGDVTAPLKALIFDSVYDAYRGVILQVRVMDGVVKPGDKIQLMSNSKTFDVAEVGIFTPKAVGRDFLATGDVGYIAASIKTVQDTRVGDTVTLATNPAAEPLHGYKQMNPMVFAGLYPIESNKYNDLREALEKLQLNDASLQFEPETSQALGFGFRCGFLGLLHMDVIQERLEREFNIDLIMTAPSVIYKVNLTDGESMDVSNPSEFPDPTKIATIEEPYVKAQIMVPQEFVGAVMELAQRKRGDFVTMDYIDDNRVNVIYQIPLAEIVFDFFDKLKSSTRGYASFDYELSEYRPSKLVKMDILLNGDKVDALSFIVHKDFAYERGKLIVDKLKKIIPRQQFEVPIQAAIGHKIVARTDIKALRKNVLAKCYGGDVSRKRKLLEKQKAGKKRMKSIGSVEVPQEAFLSVLSMDEE</sequence>
<protein>
    <recommendedName>
        <fullName evidence="1">Elongation factor 4</fullName>
        <shortName evidence="1">EF-4</shortName>
        <ecNumber evidence="1">3.6.5.n1</ecNumber>
    </recommendedName>
    <alternativeName>
        <fullName evidence="1">Ribosomal back-translocase LepA</fullName>
    </alternativeName>
</protein>
<evidence type="ECO:0000255" key="1">
    <source>
        <dbReference type="HAMAP-Rule" id="MF_00071"/>
    </source>
</evidence>
<name>LEPA_STRP4</name>
<accession>B5E4T8</accession>
<organism>
    <name type="scientific">Streptococcus pneumoniae serotype 19F (strain G54)</name>
    <dbReference type="NCBI Taxonomy" id="512566"/>
    <lineage>
        <taxon>Bacteria</taxon>
        <taxon>Bacillati</taxon>
        <taxon>Bacillota</taxon>
        <taxon>Bacilli</taxon>
        <taxon>Lactobacillales</taxon>
        <taxon>Streptococcaceae</taxon>
        <taxon>Streptococcus</taxon>
    </lineage>
</organism>
<proteinExistence type="inferred from homology"/>